<dbReference type="EC" id="2.5.1.6" evidence="1"/>
<dbReference type="EMBL" id="AE017283">
    <property type="protein sequence ID" value="AAT82942.1"/>
    <property type="molecule type" value="Genomic_DNA"/>
</dbReference>
<dbReference type="RefSeq" id="WP_002517758.1">
    <property type="nucleotide sequence ID" value="NZ_CP025935.1"/>
</dbReference>
<dbReference type="SMR" id="Q6A8H3"/>
<dbReference type="EnsemblBacteria" id="AAT82942">
    <property type="protein sequence ID" value="AAT82942"/>
    <property type="gene ID" value="PPA1193"/>
</dbReference>
<dbReference type="KEGG" id="pac:PPA1193"/>
<dbReference type="eggNOG" id="COG0192">
    <property type="taxonomic scope" value="Bacteria"/>
</dbReference>
<dbReference type="HOGENOM" id="CLU_041802_1_1_11"/>
<dbReference type="UniPathway" id="UPA00315">
    <property type="reaction ID" value="UER00080"/>
</dbReference>
<dbReference type="Proteomes" id="UP000000603">
    <property type="component" value="Chromosome"/>
</dbReference>
<dbReference type="GO" id="GO:0005737">
    <property type="term" value="C:cytoplasm"/>
    <property type="evidence" value="ECO:0007669"/>
    <property type="project" value="UniProtKB-SubCell"/>
</dbReference>
<dbReference type="GO" id="GO:0005524">
    <property type="term" value="F:ATP binding"/>
    <property type="evidence" value="ECO:0007669"/>
    <property type="project" value="UniProtKB-UniRule"/>
</dbReference>
<dbReference type="GO" id="GO:0000287">
    <property type="term" value="F:magnesium ion binding"/>
    <property type="evidence" value="ECO:0007669"/>
    <property type="project" value="UniProtKB-UniRule"/>
</dbReference>
<dbReference type="GO" id="GO:0004478">
    <property type="term" value="F:methionine adenosyltransferase activity"/>
    <property type="evidence" value="ECO:0007669"/>
    <property type="project" value="UniProtKB-UniRule"/>
</dbReference>
<dbReference type="GO" id="GO:0006730">
    <property type="term" value="P:one-carbon metabolic process"/>
    <property type="evidence" value="ECO:0007669"/>
    <property type="project" value="UniProtKB-KW"/>
</dbReference>
<dbReference type="GO" id="GO:0006556">
    <property type="term" value="P:S-adenosylmethionine biosynthetic process"/>
    <property type="evidence" value="ECO:0007669"/>
    <property type="project" value="UniProtKB-UniRule"/>
</dbReference>
<dbReference type="CDD" id="cd18079">
    <property type="entry name" value="S-AdoMet_synt"/>
    <property type="match status" value="1"/>
</dbReference>
<dbReference type="FunFam" id="3.30.300.10:FF:000003">
    <property type="entry name" value="S-adenosylmethionine synthase"/>
    <property type="match status" value="1"/>
</dbReference>
<dbReference type="Gene3D" id="3.30.300.10">
    <property type="match status" value="3"/>
</dbReference>
<dbReference type="HAMAP" id="MF_00086">
    <property type="entry name" value="S_AdoMet_synth1"/>
    <property type="match status" value="1"/>
</dbReference>
<dbReference type="InterPro" id="IPR022631">
    <property type="entry name" value="ADOMET_SYNTHASE_CS"/>
</dbReference>
<dbReference type="InterPro" id="IPR022630">
    <property type="entry name" value="S-AdoMet_synt_C"/>
</dbReference>
<dbReference type="InterPro" id="IPR022629">
    <property type="entry name" value="S-AdoMet_synt_central"/>
</dbReference>
<dbReference type="InterPro" id="IPR022628">
    <property type="entry name" value="S-AdoMet_synt_N"/>
</dbReference>
<dbReference type="InterPro" id="IPR002133">
    <property type="entry name" value="S-AdoMet_synthetase"/>
</dbReference>
<dbReference type="InterPro" id="IPR022636">
    <property type="entry name" value="S-AdoMet_synthetase_sfam"/>
</dbReference>
<dbReference type="NCBIfam" id="TIGR01034">
    <property type="entry name" value="metK"/>
    <property type="match status" value="1"/>
</dbReference>
<dbReference type="PANTHER" id="PTHR11964">
    <property type="entry name" value="S-ADENOSYLMETHIONINE SYNTHETASE"/>
    <property type="match status" value="1"/>
</dbReference>
<dbReference type="Pfam" id="PF02773">
    <property type="entry name" value="S-AdoMet_synt_C"/>
    <property type="match status" value="1"/>
</dbReference>
<dbReference type="Pfam" id="PF02772">
    <property type="entry name" value="S-AdoMet_synt_M"/>
    <property type="match status" value="1"/>
</dbReference>
<dbReference type="Pfam" id="PF00438">
    <property type="entry name" value="S-AdoMet_synt_N"/>
    <property type="match status" value="1"/>
</dbReference>
<dbReference type="PIRSF" id="PIRSF000497">
    <property type="entry name" value="MAT"/>
    <property type="match status" value="1"/>
</dbReference>
<dbReference type="SUPFAM" id="SSF55973">
    <property type="entry name" value="S-adenosylmethionine synthetase"/>
    <property type="match status" value="3"/>
</dbReference>
<dbReference type="PROSITE" id="PS00376">
    <property type="entry name" value="ADOMET_SYNTHASE_1"/>
    <property type="match status" value="1"/>
</dbReference>
<dbReference type="PROSITE" id="PS00377">
    <property type="entry name" value="ADOMET_SYNTHASE_2"/>
    <property type="match status" value="1"/>
</dbReference>
<accession>Q6A8H3</accession>
<keyword id="KW-0067">ATP-binding</keyword>
<keyword id="KW-0963">Cytoplasm</keyword>
<keyword id="KW-0460">Magnesium</keyword>
<keyword id="KW-0479">Metal-binding</keyword>
<keyword id="KW-0547">Nucleotide-binding</keyword>
<keyword id="KW-0554">One-carbon metabolism</keyword>
<keyword id="KW-0630">Potassium</keyword>
<keyword id="KW-0808">Transferase</keyword>
<proteinExistence type="inferred from homology"/>
<name>METK_CUTAK</name>
<feature type="chain" id="PRO_0000174568" description="S-adenosylmethionine synthase">
    <location>
        <begin position="1"/>
        <end position="397"/>
    </location>
</feature>
<feature type="region of interest" description="Flexible loop" evidence="1">
    <location>
        <begin position="99"/>
        <end position="109"/>
    </location>
</feature>
<feature type="binding site" description="in other chain" evidence="1">
    <location>
        <position position="15"/>
    </location>
    <ligand>
        <name>ATP</name>
        <dbReference type="ChEBI" id="CHEBI:30616"/>
        <note>ligand shared between two neighboring subunits</note>
    </ligand>
</feature>
<feature type="binding site" evidence="1">
    <location>
        <position position="17"/>
    </location>
    <ligand>
        <name>Mg(2+)</name>
        <dbReference type="ChEBI" id="CHEBI:18420"/>
    </ligand>
</feature>
<feature type="binding site" evidence="1">
    <location>
        <position position="43"/>
    </location>
    <ligand>
        <name>K(+)</name>
        <dbReference type="ChEBI" id="CHEBI:29103"/>
    </ligand>
</feature>
<feature type="binding site" description="in other chain" evidence="1">
    <location>
        <position position="56"/>
    </location>
    <ligand>
        <name>L-methionine</name>
        <dbReference type="ChEBI" id="CHEBI:57844"/>
        <note>ligand shared between two neighboring subunits</note>
    </ligand>
</feature>
<feature type="binding site" description="in other chain" evidence="1">
    <location>
        <position position="99"/>
    </location>
    <ligand>
        <name>L-methionine</name>
        <dbReference type="ChEBI" id="CHEBI:57844"/>
        <note>ligand shared between two neighboring subunits</note>
    </ligand>
</feature>
<feature type="binding site" description="in other chain" evidence="1">
    <location>
        <begin position="173"/>
        <end position="175"/>
    </location>
    <ligand>
        <name>ATP</name>
        <dbReference type="ChEBI" id="CHEBI:30616"/>
        <note>ligand shared between two neighboring subunits</note>
    </ligand>
</feature>
<feature type="binding site" description="in other chain" evidence="1">
    <location>
        <begin position="242"/>
        <end position="243"/>
    </location>
    <ligand>
        <name>ATP</name>
        <dbReference type="ChEBI" id="CHEBI:30616"/>
        <note>ligand shared between two neighboring subunits</note>
    </ligand>
</feature>
<feature type="binding site" evidence="1">
    <location>
        <position position="251"/>
    </location>
    <ligand>
        <name>ATP</name>
        <dbReference type="ChEBI" id="CHEBI:30616"/>
        <note>ligand shared between two neighboring subunits</note>
    </ligand>
</feature>
<feature type="binding site" evidence="1">
    <location>
        <position position="251"/>
    </location>
    <ligand>
        <name>L-methionine</name>
        <dbReference type="ChEBI" id="CHEBI:57844"/>
        <note>ligand shared between two neighboring subunits</note>
    </ligand>
</feature>
<feature type="binding site" description="in other chain" evidence="1">
    <location>
        <begin position="257"/>
        <end position="258"/>
    </location>
    <ligand>
        <name>ATP</name>
        <dbReference type="ChEBI" id="CHEBI:30616"/>
        <note>ligand shared between two neighboring subunits</note>
    </ligand>
</feature>
<feature type="binding site" evidence="1">
    <location>
        <position position="274"/>
    </location>
    <ligand>
        <name>ATP</name>
        <dbReference type="ChEBI" id="CHEBI:30616"/>
        <note>ligand shared between two neighboring subunits</note>
    </ligand>
</feature>
<feature type="binding site" evidence="1">
    <location>
        <position position="278"/>
    </location>
    <ligand>
        <name>ATP</name>
        <dbReference type="ChEBI" id="CHEBI:30616"/>
        <note>ligand shared between two neighboring subunits</note>
    </ligand>
</feature>
<feature type="binding site" description="in other chain" evidence="1">
    <location>
        <position position="282"/>
    </location>
    <ligand>
        <name>L-methionine</name>
        <dbReference type="ChEBI" id="CHEBI:57844"/>
        <note>ligand shared between two neighboring subunits</note>
    </ligand>
</feature>
<evidence type="ECO:0000255" key="1">
    <source>
        <dbReference type="HAMAP-Rule" id="MF_00086"/>
    </source>
</evidence>
<reference key="1">
    <citation type="journal article" date="2004" name="Science">
        <title>The complete genome sequence of Propionibacterium acnes, a commensal of human skin.</title>
        <authorList>
            <person name="Brueggemann H."/>
            <person name="Henne A."/>
            <person name="Hoster F."/>
            <person name="Liesegang H."/>
            <person name="Wiezer A."/>
            <person name="Strittmatter A."/>
            <person name="Hujer S."/>
            <person name="Duerre P."/>
            <person name="Gottschalk G."/>
        </authorList>
    </citation>
    <scope>NUCLEOTIDE SEQUENCE [LARGE SCALE GENOMIC DNA]</scope>
    <source>
        <strain>DSM 16379 / KPA171202</strain>
    </source>
</reference>
<comment type="function">
    <text evidence="1">Catalyzes the formation of S-adenosylmethionine (AdoMet) from methionine and ATP. The overall synthetic reaction is composed of two sequential steps, AdoMet formation and the subsequent tripolyphosphate hydrolysis which occurs prior to release of AdoMet from the enzyme.</text>
</comment>
<comment type="catalytic activity">
    <reaction evidence="1">
        <text>L-methionine + ATP + H2O = S-adenosyl-L-methionine + phosphate + diphosphate</text>
        <dbReference type="Rhea" id="RHEA:21080"/>
        <dbReference type="ChEBI" id="CHEBI:15377"/>
        <dbReference type="ChEBI" id="CHEBI:30616"/>
        <dbReference type="ChEBI" id="CHEBI:33019"/>
        <dbReference type="ChEBI" id="CHEBI:43474"/>
        <dbReference type="ChEBI" id="CHEBI:57844"/>
        <dbReference type="ChEBI" id="CHEBI:59789"/>
        <dbReference type="EC" id="2.5.1.6"/>
    </reaction>
</comment>
<comment type="cofactor">
    <cofactor evidence="1">
        <name>Mg(2+)</name>
        <dbReference type="ChEBI" id="CHEBI:18420"/>
    </cofactor>
    <text evidence="1">Binds 2 divalent ions per subunit.</text>
</comment>
<comment type="cofactor">
    <cofactor evidence="1">
        <name>K(+)</name>
        <dbReference type="ChEBI" id="CHEBI:29103"/>
    </cofactor>
    <text evidence="1">Binds 1 potassium ion per subunit.</text>
</comment>
<comment type="pathway">
    <text evidence="1">Amino-acid biosynthesis; S-adenosyl-L-methionine biosynthesis; S-adenosyl-L-methionine from L-methionine: step 1/1.</text>
</comment>
<comment type="subunit">
    <text evidence="1">Homotetramer; dimer of dimers.</text>
</comment>
<comment type="subcellular location">
    <subcellularLocation>
        <location evidence="1">Cytoplasm</location>
    </subcellularLocation>
</comment>
<comment type="similarity">
    <text evidence="1">Belongs to the AdoMet synthase family.</text>
</comment>
<organism>
    <name type="scientific">Cutibacterium acnes (strain DSM 16379 / KPA171202)</name>
    <name type="common">Propionibacterium acnes</name>
    <dbReference type="NCBI Taxonomy" id="267747"/>
    <lineage>
        <taxon>Bacteria</taxon>
        <taxon>Bacillati</taxon>
        <taxon>Actinomycetota</taxon>
        <taxon>Actinomycetes</taxon>
        <taxon>Propionibacteriales</taxon>
        <taxon>Propionibacteriaceae</taxon>
        <taxon>Cutibacterium</taxon>
    </lineage>
</organism>
<sequence>MPTRLFTSESVTEGHPDKIADAISDAVLDAMLTEDSHSHAAVETVVTTGQVMVCGEVTTEAYVDIADIARSRILDIGYDSSSKGFDGASCGVSVAIDAQSPDIAQGVTAAYETRHGSTDLIDSQGAGDQGLMFGYACTETPSLMPLPIDMAHALSLQLTKVRKEGALDYLCPDGKTQVTIRYNEDDKPVAVDTVIVSSQHRAGIDLDATMTPDLRRLVIDPVLERYDLDHKDMRVLVNPTGKFVIGGPMGDAGLTGRKIIVDTYGGMARHGGGAFSGKDPSKVDRSGAYAMRWVAKNVVAAGLADRCECQVAYAIGAARPVGFRIDTFGTNHVPETVIERAVGEVFDLRPGAIIADLDLLRPIYSQLVAGGHFGRELPGVTWELTDRAEALAATARL</sequence>
<protein>
    <recommendedName>
        <fullName evidence="1">S-adenosylmethionine synthase</fullName>
        <shortName evidence="1">AdoMet synthase</shortName>
        <ecNumber evidence="1">2.5.1.6</ecNumber>
    </recommendedName>
    <alternativeName>
        <fullName evidence="1">MAT</fullName>
    </alternativeName>
    <alternativeName>
        <fullName evidence="1">Methionine adenosyltransferase</fullName>
    </alternativeName>
</protein>
<gene>
    <name evidence="1" type="primary">metK</name>
    <name type="ordered locus">PPA1193</name>
</gene>